<accession>Q9A6N1</accession>
<reference key="1">
    <citation type="journal article" date="2001" name="Proc. Natl. Acad. Sci. U.S.A.">
        <title>Complete genome sequence of Caulobacter crescentus.</title>
        <authorList>
            <person name="Nierman W.C."/>
            <person name="Feldblyum T.V."/>
            <person name="Laub M.T."/>
            <person name="Paulsen I.T."/>
            <person name="Nelson K.E."/>
            <person name="Eisen J.A."/>
            <person name="Heidelberg J.F."/>
            <person name="Alley M.R.K."/>
            <person name="Ohta N."/>
            <person name="Maddock J.R."/>
            <person name="Potocka I."/>
            <person name="Nelson W.C."/>
            <person name="Newton A."/>
            <person name="Stephens C."/>
            <person name="Phadke N.D."/>
            <person name="Ely B."/>
            <person name="DeBoy R.T."/>
            <person name="Dodson R.J."/>
            <person name="Durkin A.S."/>
            <person name="Gwinn M.L."/>
            <person name="Haft D.H."/>
            <person name="Kolonay J.F."/>
            <person name="Smit J."/>
            <person name="Craven M.B."/>
            <person name="Khouri H.M."/>
            <person name="Shetty J."/>
            <person name="Berry K.J."/>
            <person name="Utterback T.R."/>
            <person name="Tran K."/>
            <person name="Wolf A.M."/>
            <person name="Vamathevan J.J."/>
            <person name="Ermolaeva M.D."/>
            <person name="White O."/>
            <person name="Salzberg S.L."/>
            <person name="Venter J.C."/>
            <person name="Shapiro L."/>
            <person name="Fraser C.M."/>
        </authorList>
    </citation>
    <scope>NUCLEOTIDE SEQUENCE [LARGE SCALE GENOMIC DNA]</scope>
    <source>
        <strain>ATCC 19089 / CIP 103742 / CB 15</strain>
    </source>
</reference>
<feature type="chain" id="PRO_0000090090" description="6-phosphogluconolactonase">
    <location>
        <begin position="1"/>
        <end position="232"/>
    </location>
</feature>
<dbReference type="EC" id="3.1.1.31"/>
<dbReference type="EMBL" id="AE005673">
    <property type="protein sequence ID" value="AAK24029.1"/>
    <property type="molecule type" value="Genomic_DNA"/>
</dbReference>
<dbReference type="PIR" id="A87504">
    <property type="entry name" value="A87504"/>
</dbReference>
<dbReference type="RefSeq" id="NP_420861.1">
    <property type="nucleotide sequence ID" value="NC_002696.2"/>
</dbReference>
<dbReference type="RefSeq" id="WP_010919919.1">
    <property type="nucleotide sequence ID" value="NC_002696.2"/>
</dbReference>
<dbReference type="SMR" id="Q9A6N1"/>
<dbReference type="STRING" id="190650.CC_2056"/>
<dbReference type="EnsemblBacteria" id="AAK24029">
    <property type="protein sequence ID" value="AAK24029"/>
    <property type="gene ID" value="CC_2056"/>
</dbReference>
<dbReference type="KEGG" id="ccr:CC_2056"/>
<dbReference type="PATRIC" id="fig|190650.5.peg.2075"/>
<dbReference type="eggNOG" id="COG0363">
    <property type="taxonomic scope" value="Bacteria"/>
</dbReference>
<dbReference type="HOGENOM" id="CLU_053947_2_1_5"/>
<dbReference type="BioCyc" id="CAULO:CC2056-MONOMER"/>
<dbReference type="UniPathway" id="UPA00115">
    <property type="reaction ID" value="UER00409"/>
</dbReference>
<dbReference type="Proteomes" id="UP000001816">
    <property type="component" value="Chromosome"/>
</dbReference>
<dbReference type="GO" id="GO:0017057">
    <property type="term" value="F:6-phosphogluconolactonase activity"/>
    <property type="evidence" value="ECO:0007669"/>
    <property type="project" value="UniProtKB-EC"/>
</dbReference>
<dbReference type="GO" id="GO:0005975">
    <property type="term" value="P:carbohydrate metabolic process"/>
    <property type="evidence" value="ECO:0007669"/>
    <property type="project" value="InterPro"/>
</dbReference>
<dbReference type="GO" id="GO:0006098">
    <property type="term" value="P:pentose-phosphate shunt"/>
    <property type="evidence" value="ECO:0007669"/>
    <property type="project" value="UniProtKB-UniPathway"/>
</dbReference>
<dbReference type="CDD" id="cd01400">
    <property type="entry name" value="6PGL"/>
    <property type="match status" value="1"/>
</dbReference>
<dbReference type="Gene3D" id="3.40.50.1360">
    <property type="match status" value="1"/>
</dbReference>
<dbReference type="InterPro" id="IPR005900">
    <property type="entry name" value="6-phosphogluconolactonase_DevB"/>
</dbReference>
<dbReference type="InterPro" id="IPR006148">
    <property type="entry name" value="Glc/Gal-6P_isomerase"/>
</dbReference>
<dbReference type="InterPro" id="IPR037171">
    <property type="entry name" value="NagB/RpiA_transferase-like"/>
</dbReference>
<dbReference type="InterPro" id="IPR039104">
    <property type="entry name" value="PGLS"/>
</dbReference>
<dbReference type="NCBIfam" id="TIGR01198">
    <property type="entry name" value="pgl"/>
    <property type="match status" value="1"/>
</dbReference>
<dbReference type="PANTHER" id="PTHR11054">
    <property type="entry name" value="6-PHOSPHOGLUCONOLACTONASE"/>
    <property type="match status" value="1"/>
</dbReference>
<dbReference type="PANTHER" id="PTHR11054:SF0">
    <property type="entry name" value="6-PHOSPHOGLUCONOLACTONASE"/>
    <property type="match status" value="1"/>
</dbReference>
<dbReference type="Pfam" id="PF01182">
    <property type="entry name" value="Glucosamine_iso"/>
    <property type="match status" value="1"/>
</dbReference>
<dbReference type="SUPFAM" id="SSF100950">
    <property type="entry name" value="NagB/RpiA/CoA transferase-like"/>
    <property type="match status" value="1"/>
</dbReference>
<comment type="function">
    <text>Hydrolysis of 6-phosphogluconolactone to 6-phosphogluconate.</text>
</comment>
<comment type="catalytic activity">
    <reaction>
        <text>6-phospho-D-glucono-1,5-lactone + H2O = 6-phospho-D-gluconate + H(+)</text>
        <dbReference type="Rhea" id="RHEA:12556"/>
        <dbReference type="ChEBI" id="CHEBI:15377"/>
        <dbReference type="ChEBI" id="CHEBI:15378"/>
        <dbReference type="ChEBI" id="CHEBI:57955"/>
        <dbReference type="ChEBI" id="CHEBI:58759"/>
        <dbReference type="EC" id="3.1.1.31"/>
    </reaction>
</comment>
<comment type="pathway">
    <text>Carbohydrate degradation; pentose phosphate pathway; D-ribulose 5-phosphate from D-glucose 6-phosphate (oxidative stage): step 2/3.</text>
</comment>
<comment type="similarity">
    <text evidence="1">Belongs to the glucosamine/galactosamine-6-phosphate isomerase family. 6-phosphogluconolactonase subfamily.</text>
</comment>
<evidence type="ECO:0000305" key="1"/>
<protein>
    <recommendedName>
        <fullName>6-phosphogluconolactonase</fullName>
        <shortName>6PGL</shortName>
        <ecNumber>3.1.1.31</ecNumber>
    </recommendedName>
</protein>
<keyword id="KW-0378">Hydrolase</keyword>
<keyword id="KW-1185">Reference proteome</keyword>
<organism>
    <name type="scientific">Caulobacter vibrioides (strain ATCC 19089 / CIP 103742 / CB 15)</name>
    <name type="common">Caulobacter crescentus</name>
    <dbReference type="NCBI Taxonomy" id="190650"/>
    <lineage>
        <taxon>Bacteria</taxon>
        <taxon>Pseudomonadati</taxon>
        <taxon>Pseudomonadota</taxon>
        <taxon>Alphaproteobacteria</taxon>
        <taxon>Caulobacterales</taxon>
        <taxon>Caulobacteraceae</taxon>
        <taxon>Caulobacter</taxon>
    </lineage>
</organism>
<sequence>MPFTPIKLEAFGSREDLYDAAASVLVGALTTAVARHGRVGFAATGGTTPAPVYDRMATMTAPWDKVTVTLTDERFVPATDASSNEGLVRRHLLVGEAAKASFAPLFFDGVSHDESARKAEAGVNAATPFGVVLLGVGPDGHFASLFPGNPMLDQGLDLATDRSVLAVPPSDPAPDLPRLSLTLAALTRTDLIVLLVTGAAKKALLDGDVDPALPVAAILKQDRAKVRILWAE</sequence>
<gene>
    <name type="primary">pgl</name>
    <name type="ordered locus">CC_2056</name>
</gene>
<name>6PGL_CAUVC</name>
<proteinExistence type="inferred from homology"/>